<comment type="function">
    <text evidence="1 4">Protein-arginine N-acetylglucosaminyltransferase effector that catalyzes the transfer of a single N-acetylglucosamine (GlcNAc) to a conserved arginine residue in the death domain of host proteins such as FADD: arginine GlcNAcylation prevents homotypic/heterotypic death domain interactions (PubMed:28522607). Also acts on host proteins without a death domain: catalyzes arginine GlcNAcylation of host small Rab1 GTPase, thereby preventing GTPase activity and leading to impaired host vesicular protein transport (By similarity). In contrast to Ssek1, not able to disrupt TNF signaling in infected cells (PubMed:28522607).</text>
</comment>
<comment type="catalytic activity">
    <reaction evidence="1">
        <text>L-arginyl-[protein] + UDP-N-acetyl-alpha-D-glucosamine = N(omega)-(N-acetyl-beta-D-glucosaminyl)-L-arginyl-[protein] + UDP + H(+)</text>
        <dbReference type="Rhea" id="RHEA:66632"/>
        <dbReference type="Rhea" id="RHEA-COMP:10532"/>
        <dbReference type="Rhea" id="RHEA-COMP:17079"/>
        <dbReference type="ChEBI" id="CHEBI:15378"/>
        <dbReference type="ChEBI" id="CHEBI:29965"/>
        <dbReference type="ChEBI" id="CHEBI:57705"/>
        <dbReference type="ChEBI" id="CHEBI:58223"/>
        <dbReference type="ChEBI" id="CHEBI:167322"/>
    </reaction>
    <physiologicalReaction direction="left-to-right" evidence="1">
        <dbReference type="Rhea" id="RHEA:66633"/>
    </physiologicalReaction>
</comment>
<comment type="cofactor">
    <cofactor evidence="1">
        <name>Mn(2+)</name>
        <dbReference type="ChEBI" id="CHEBI:29035"/>
    </cofactor>
</comment>
<comment type="activity regulation">
    <text evidence="5">Protein-arginine N-acetylglucosaminyltransferase activity is inhibited by 100066N compound (flavone analog) and 102644N compound (a substituted isoxazole).</text>
</comment>
<comment type="subcellular location">
    <subcellularLocation>
        <location evidence="2">Secreted</location>
    </subcellularLocation>
    <subcellularLocation>
        <location evidence="3">Host Golgi apparatus</location>
    </subcellularLocation>
    <text evidence="2">Secreted via the type III secretion system (T3SS).</text>
</comment>
<comment type="domain">
    <text evidence="1">Adopts a GT-A fold and acts as an inverting enzyme that converts the alpha-configuration in the UDP-N-acetyl-alpha-D-glucosamine donor to the beta configuration in the N-linked (GlcNAc) arginine product.</text>
</comment>
<comment type="similarity">
    <text evidence="7">Belongs to the glycosyltransferase NleB family.</text>
</comment>
<keyword id="KW-0328">Glycosyltransferase</keyword>
<keyword id="KW-1040">Host Golgi apparatus</keyword>
<keyword id="KW-0464">Manganese</keyword>
<keyword id="KW-0479">Metal-binding</keyword>
<keyword id="KW-1185">Reference proteome</keyword>
<keyword id="KW-0964">Secreted</keyword>
<keyword id="KW-0800">Toxin</keyword>
<keyword id="KW-0808">Transferase</keyword>
<keyword id="KW-0843">Virulence</keyword>
<protein>
    <recommendedName>
        <fullName evidence="7">Protein-arginine N-acetylglucosaminyltransferase SseK2</fullName>
        <shortName evidence="7">Arginine GlcNAcyltransferase SseK2</shortName>
        <ecNumber evidence="1">2.4.1.-</ecNumber>
    </recommendedName>
    <alternativeName>
        <fullName evidence="6">Salmonella secreted effector K2</fullName>
    </alternativeName>
</protein>
<name>SSEK2_SALTY</name>
<proteinExistence type="inferred from homology"/>
<gene>
    <name evidence="6" type="primary">sseK2</name>
    <name evidence="8" type="ordered locus">STM2137</name>
</gene>
<accession>Q8ZNP4</accession>
<evidence type="ECO:0000250" key="1">
    <source>
        <dbReference type="UniProtKB" id="P0DUJ8"/>
    </source>
</evidence>
<evidence type="ECO:0000269" key="2">
    <source>
    </source>
</evidence>
<evidence type="ECO:0000269" key="3">
    <source>
    </source>
</evidence>
<evidence type="ECO:0000269" key="4">
    <source>
    </source>
</evidence>
<evidence type="ECO:0000269" key="5">
    <source>
    </source>
</evidence>
<evidence type="ECO:0000303" key="6">
    <source>
    </source>
</evidence>
<evidence type="ECO:0000305" key="7"/>
<evidence type="ECO:0000312" key="8">
    <source>
        <dbReference type="EMBL" id="AAL21040.1"/>
    </source>
</evidence>
<dbReference type="EC" id="2.4.1.-" evidence="1"/>
<dbReference type="EMBL" id="AE006468">
    <property type="protein sequence ID" value="AAL21040.1"/>
    <property type="molecule type" value="Genomic_DNA"/>
</dbReference>
<dbReference type="RefSeq" id="NP_461081.1">
    <property type="nucleotide sequence ID" value="NC_003197.2"/>
</dbReference>
<dbReference type="RefSeq" id="WP_010989041.1">
    <property type="nucleotide sequence ID" value="NC_003197.2"/>
</dbReference>
<dbReference type="SMR" id="Q8ZNP4"/>
<dbReference type="STRING" id="99287.STM2137"/>
<dbReference type="PaxDb" id="99287-STM2137"/>
<dbReference type="GeneID" id="1253658"/>
<dbReference type="KEGG" id="stm:STM2137"/>
<dbReference type="PATRIC" id="fig|99287.12.peg.2261"/>
<dbReference type="HOGENOM" id="CLU_081850_0_0_6"/>
<dbReference type="OMA" id="PIRTICH"/>
<dbReference type="PhylomeDB" id="Q8ZNP4"/>
<dbReference type="BioCyc" id="SENT99287:STM2137-MONOMER"/>
<dbReference type="Proteomes" id="UP000001014">
    <property type="component" value="Chromosome"/>
</dbReference>
<dbReference type="GO" id="GO:0005576">
    <property type="term" value="C:extracellular region"/>
    <property type="evidence" value="ECO:0007669"/>
    <property type="project" value="UniProtKB-SubCell"/>
</dbReference>
<dbReference type="GO" id="GO:0043657">
    <property type="term" value="C:host cell"/>
    <property type="evidence" value="ECO:0000314"/>
    <property type="project" value="UniProtKB"/>
</dbReference>
<dbReference type="GO" id="GO:0044177">
    <property type="term" value="C:host cell Golgi apparatus"/>
    <property type="evidence" value="ECO:0007669"/>
    <property type="project" value="UniProtKB-SubCell"/>
</dbReference>
<dbReference type="GO" id="GO:0046872">
    <property type="term" value="F:metal ion binding"/>
    <property type="evidence" value="ECO:0007669"/>
    <property type="project" value="UniProtKB-KW"/>
</dbReference>
<dbReference type="GO" id="GO:0106362">
    <property type="term" value="F:protein-arginine N-acetylglucosaminyltransferase activity"/>
    <property type="evidence" value="ECO:0000314"/>
    <property type="project" value="UniProtKB"/>
</dbReference>
<dbReference type="GO" id="GO:0090729">
    <property type="term" value="F:toxin activity"/>
    <property type="evidence" value="ECO:0007669"/>
    <property type="project" value="UniProtKB-KW"/>
</dbReference>
<dbReference type="NCBIfam" id="NF011910">
    <property type="entry name" value="PRK15383.1"/>
    <property type="match status" value="1"/>
</dbReference>
<dbReference type="Pfam" id="PF24688">
    <property type="entry name" value="SseK_NleB"/>
    <property type="match status" value="1"/>
</dbReference>
<reference key="1">
    <citation type="journal article" date="2001" name="Nature">
        <title>Complete genome sequence of Salmonella enterica serovar Typhimurium LT2.</title>
        <authorList>
            <person name="McClelland M."/>
            <person name="Sanderson K.E."/>
            <person name="Spieth J."/>
            <person name="Clifton S.W."/>
            <person name="Latreille P."/>
            <person name="Courtney L."/>
            <person name="Porwollik S."/>
            <person name="Ali J."/>
            <person name="Dante M."/>
            <person name="Du F."/>
            <person name="Hou S."/>
            <person name="Layman D."/>
            <person name="Leonard S."/>
            <person name="Nguyen C."/>
            <person name="Scott K."/>
            <person name="Holmes A."/>
            <person name="Grewal N."/>
            <person name="Mulvaney E."/>
            <person name="Ryan E."/>
            <person name="Sun H."/>
            <person name="Florea L."/>
            <person name="Miller W."/>
            <person name="Stoneking T."/>
            <person name="Nhan M."/>
            <person name="Waterston R."/>
            <person name="Wilson R.K."/>
        </authorList>
    </citation>
    <scope>NUCLEOTIDE SEQUENCE [LARGE SCALE GENOMIC DNA]</scope>
    <source>
        <strain>LT2 / SGSC1412 / ATCC 700720</strain>
    </source>
</reference>
<reference key="2">
    <citation type="journal article" date="2004" name="Infect. Immun.">
        <title>SseK1 and SseK2 are novel translocated proteins of Salmonella enterica serovar typhimurium.</title>
        <authorList>
            <person name="Kujat Choy S.L."/>
            <person name="Boyle E.C."/>
            <person name="Gal-Mor O."/>
            <person name="Goode D.L."/>
            <person name="Valdez Y."/>
            <person name="Vallance B.A."/>
            <person name="Finlay B.B."/>
        </authorList>
    </citation>
    <scope>SUBCELLULAR LOCATION</scope>
    <source>
        <strain>LT2 / SGSC1412 / ATCC 700720</strain>
    </source>
</reference>
<reference key="3">
    <citation type="journal article" date="2017" name="J. Biol. Chem.">
        <title>NleB/SseK effectors from Citrobacter rodentium, Escherichia coli, and Salmonella enterica display distinct differences in host substrate specificity.</title>
        <authorList>
            <person name="El Qaidi S."/>
            <person name="Chen K."/>
            <person name="Halim A."/>
            <person name="Siukstaite L."/>
            <person name="Rueter C."/>
            <person name="Hurtado-Guerrero R."/>
            <person name="Clausen H."/>
            <person name="Hardwidge P.R."/>
        </authorList>
    </citation>
    <scope>FUNCTION</scope>
    <source>
        <strain>LT2 / SGSC1412 / ATCC 700720</strain>
    </source>
</reference>
<reference key="4">
    <citation type="journal article" date="2018" name="Front. Cell. Infect. Microbiol.">
        <title>High-throughput screening for bacterial glycosyltransferase inhibitors.</title>
        <authorList>
            <person name="El Qaidi S."/>
            <person name="Zhu C."/>
            <person name="McDonald P."/>
            <person name="Roy A."/>
            <person name="Maity P.K."/>
            <person name="Rane D."/>
            <person name="Perera C."/>
            <person name="Hardwidge P.R."/>
        </authorList>
    </citation>
    <scope>ACTIVITY REGULATION</scope>
    <source>
        <strain>LT2 / SGSC1412 / ATCC 700720</strain>
    </source>
</reference>
<reference key="5">
    <citation type="journal article" date="2017" name="Infect. Immun.">
        <title>SseK1 and SseK3 type III secretion system effectors inhibit NF-kappaB signaling and necroptotic cell death in salmonella-infected macrophages.</title>
        <authorList>
            <person name="Guenster R.A."/>
            <person name="Matthews S.A."/>
            <person name="Holden D.W."/>
            <person name="Thurston T.L.M."/>
        </authorList>
    </citation>
    <scope>SUBCELLULAR LOCATION</scope>
    <source>
        <strain>ATCC 14028 / SGSC 2980 / CDC 6516-60 / NCTC 12023</strain>
    </source>
</reference>
<organism>
    <name type="scientific">Salmonella typhimurium (strain LT2 / SGSC1412 / ATCC 700720)</name>
    <dbReference type="NCBI Taxonomy" id="99287"/>
    <lineage>
        <taxon>Bacteria</taxon>
        <taxon>Pseudomonadati</taxon>
        <taxon>Pseudomonadota</taxon>
        <taxon>Gammaproteobacteria</taxon>
        <taxon>Enterobacterales</taxon>
        <taxon>Enterobacteriaceae</taxon>
        <taxon>Salmonella</taxon>
    </lineage>
</organism>
<sequence length="348" mass="39566">MARFNAAFTRIKIMFSRIRGLISCQSNTQTIAPTLSPPSSGHVSFAGIDYPLLPLNHQTPLVFQWFERNPDRFGQNEIPIINTQKNPYLNNIINAAIIEKERIIGIFVDGDFSKGQRKALGKLEQNYRNIKVIYNSDLNYSMYDKKLTTIYLENITKLEAQSASERDEVLLNGVKKSLEDVLKNNPEETLISSHNKDKGHLWFDFYRNLFLLKGSDAFLEAGKPGCHHLQPGGGCIYLDADMLLTDKLGTLYLPDGIAIHVSRKDNHVSLENGIIAVNRSEHPALIKGLEIMHSKPYGDPYNDWLSKGLRHYFDGSHIQDYDAFCDFIEFKHENIIMNTSSLTASSWR</sequence>
<feature type="chain" id="PRO_0000452599" description="Protein-arginine N-acetylglucosaminyltransferase SseK2">
    <location>
        <begin position="1"/>
        <end position="348"/>
    </location>
</feature>
<feature type="short sequence motif" description="DXD motif" evidence="7">
    <location>
        <begin position="239"/>
        <end position="241"/>
    </location>
</feature>
<feature type="active site" description="Proton acceptor" evidence="1">
    <location>
        <position position="271"/>
    </location>
</feature>
<feature type="binding site" evidence="1">
    <location>
        <begin position="64"/>
        <end position="66"/>
    </location>
    <ligand>
        <name>UDP-N-acetyl-alpha-D-glucosamine</name>
        <dbReference type="ChEBI" id="CHEBI:57705"/>
    </ligand>
</feature>
<feature type="binding site" evidence="1">
    <location>
        <position position="88"/>
    </location>
    <ligand>
        <name>UDP-N-acetyl-alpha-D-glucosamine</name>
        <dbReference type="ChEBI" id="CHEBI:57705"/>
    </ligand>
</feature>
<feature type="binding site" evidence="1">
    <location>
        <begin position="237"/>
        <end position="240"/>
    </location>
    <ligand>
        <name>UDP-N-acetyl-alpha-D-glucosamine</name>
        <dbReference type="ChEBI" id="CHEBI:57705"/>
    </ligand>
</feature>
<feature type="binding site" evidence="1">
    <location>
        <position position="241"/>
    </location>
    <ligand>
        <name>Mn(2+)</name>
        <dbReference type="ChEBI" id="CHEBI:29035"/>
    </ligand>
</feature>
<feature type="binding site" evidence="1">
    <location>
        <position position="338"/>
    </location>
    <ligand>
        <name>Mn(2+)</name>
        <dbReference type="ChEBI" id="CHEBI:29035"/>
    </ligand>
</feature>
<feature type="binding site" evidence="1">
    <location>
        <position position="338"/>
    </location>
    <ligand>
        <name>UDP-N-acetyl-alpha-D-glucosamine</name>
        <dbReference type="ChEBI" id="CHEBI:57705"/>
    </ligand>
</feature>
<feature type="binding site" evidence="1">
    <location>
        <position position="340"/>
    </location>
    <ligand>
        <name>Mn(2+)</name>
        <dbReference type="ChEBI" id="CHEBI:29035"/>
    </ligand>
</feature>
<feature type="binding site" evidence="1">
    <location>
        <position position="340"/>
    </location>
    <ligand>
        <name>UDP-N-acetyl-alpha-D-glucosamine</name>
        <dbReference type="ChEBI" id="CHEBI:57705"/>
    </ligand>
</feature>
<feature type="binding site" evidence="1">
    <location>
        <begin position="345"/>
        <end position="348"/>
    </location>
    <ligand>
        <name>UDP-N-acetyl-alpha-D-glucosamine</name>
        <dbReference type="ChEBI" id="CHEBI:57705"/>
    </ligand>
</feature>